<dbReference type="EMBL" id="EF587374">
    <property type="protein sequence ID" value="ABU88214.1"/>
    <property type="molecule type" value="Genomic_DNA"/>
</dbReference>
<dbReference type="EMBL" id="EU677193">
    <property type="protein sequence ID" value="ACC97253.1"/>
    <property type="molecule type" value="Genomic_DNA"/>
</dbReference>
<dbReference type="EMBL" id="EU677193">
    <property type="protein sequence ID" value="ACC97285.1"/>
    <property type="molecule type" value="Genomic_DNA"/>
</dbReference>
<dbReference type="RefSeq" id="YP_002000426.1">
    <property type="nucleotide sequence ID" value="NC_011031.1"/>
</dbReference>
<dbReference type="RefSeq" id="YP_002000451.1">
    <property type="nucleotide sequence ID" value="NC_011031.1"/>
</dbReference>
<dbReference type="SMR" id="B2X201"/>
<dbReference type="GeneID" id="6440145"/>
<dbReference type="GeneID" id="6440156"/>
<dbReference type="GO" id="GO:0009507">
    <property type="term" value="C:chloroplast"/>
    <property type="evidence" value="ECO:0007669"/>
    <property type="project" value="UniProtKB-SubCell"/>
</dbReference>
<dbReference type="GO" id="GO:0015935">
    <property type="term" value="C:small ribosomal subunit"/>
    <property type="evidence" value="ECO:0007669"/>
    <property type="project" value="TreeGrafter"/>
</dbReference>
<dbReference type="GO" id="GO:0019843">
    <property type="term" value="F:rRNA binding"/>
    <property type="evidence" value="ECO:0007669"/>
    <property type="project" value="UniProtKB-UniRule"/>
</dbReference>
<dbReference type="GO" id="GO:0003735">
    <property type="term" value="F:structural constituent of ribosome"/>
    <property type="evidence" value="ECO:0007669"/>
    <property type="project" value="InterPro"/>
</dbReference>
<dbReference type="GO" id="GO:0006412">
    <property type="term" value="P:translation"/>
    <property type="evidence" value="ECO:0007669"/>
    <property type="project" value="UniProtKB-UniRule"/>
</dbReference>
<dbReference type="FunFam" id="1.10.287.1480:FF:000001">
    <property type="entry name" value="30S ribosomal protein S14"/>
    <property type="match status" value="1"/>
</dbReference>
<dbReference type="Gene3D" id="1.10.287.1480">
    <property type="match status" value="1"/>
</dbReference>
<dbReference type="HAMAP" id="MF_00537">
    <property type="entry name" value="Ribosomal_uS14_1"/>
    <property type="match status" value="1"/>
</dbReference>
<dbReference type="InterPro" id="IPR001209">
    <property type="entry name" value="Ribosomal_uS14"/>
</dbReference>
<dbReference type="InterPro" id="IPR023036">
    <property type="entry name" value="Ribosomal_uS14_bac/plastid"/>
</dbReference>
<dbReference type="InterPro" id="IPR018271">
    <property type="entry name" value="Ribosomal_uS14_CS"/>
</dbReference>
<dbReference type="NCBIfam" id="NF006477">
    <property type="entry name" value="PRK08881.1"/>
    <property type="match status" value="1"/>
</dbReference>
<dbReference type="PANTHER" id="PTHR19836">
    <property type="entry name" value="30S RIBOSOMAL PROTEIN S14"/>
    <property type="match status" value="1"/>
</dbReference>
<dbReference type="PANTHER" id="PTHR19836:SF19">
    <property type="entry name" value="SMALL RIBOSOMAL SUBUNIT PROTEIN US14M"/>
    <property type="match status" value="1"/>
</dbReference>
<dbReference type="Pfam" id="PF00253">
    <property type="entry name" value="Ribosomal_S14"/>
    <property type="match status" value="1"/>
</dbReference>
<dbReference type="SUPFAM" id="SSF57716">
    <property type="entry name" value="Glucocorticoid receptor-like (DNA-binding domain)"/>
    <property type="match status" value="1"/>
</dbReference>
<dbReference type="PROSITE" id="PS00527">
    <property type="entry name" value="RIBOSOMAL_S14"/>
    <property type="match status" value="1"/>
</dbReference>
<name>RR14_OEDCA</name>
<organism>
    <name type="scientific">Oedogonium cardiacum</name>
    <name type="common">Filamentous green alga</name>
    <dbReference type="NCBI Taxonomy" id="55995"/>
    <lineage>
        <taxon>Eukaryota</taxon>
        <taxon>Viridiplantae</taxon>
        <taxon>Chlorophyta</taxon>
        <taxon>core chlorophytes</taxon>
        <taxon>Chlorophyceae</taxon>
        <taxon>OCC clade</taxon>
        <taxon>Oedogoniales</taxon>
        <taxon>Oedogoniaceae</taxon>
        <taxon>Oedogonium</taxon>
    </lineage>
</organism>
<reference key="1">
    <citation type="journal article" date="2008" name="J. Phycol.">
        <title>Deep division in the Chlorophyceae (Chlorophyta) revealed by chloroplast phylogenomic analyseS.</title>
        <authorList>
            <person name="Turmel M."/>
            <person name="Brouard J.-S."/>
            <person name="Gagnon C."/>
            <person name="Otis C."/>
            <person name="Lemieux C."/>
        </authorList>
        <dbReference type="AGRICOLA" id="IND44059346"/>
    </citation>
    <scope>NUCLEOTIDE SEQUENCE [GENOMIC DNA]</scope>
    <source>
        <strain>SAG 575-1b / CCAP 575/1B / UTEX LB 40</strain>
    </source>
</reference>
<reference key="2">
    <citation type="journal article" date="2008" name="BMC Genomics">
        <title>Chloroplast DNA sequence of the green alga Oedogonium cardiacum (Chlorophyceae): unique genome architecture, derived characters shared with the Chaetophorales and novel genes acquired through horizontal transfer.</title>
        <authorList>
            <person name="Brouard J.-S."/>
            <person name="Otis C."/>
            <person name="Lemieux C."/>
            <person name="Turmel M."/>
        </authorList>
    </citation>
    <scope>NUCLEOTIDE SEQUENCE [LARGE SCALE GENOMIC DNA]</scope>
    <source>
        <strain>SAG 575-1b / CCAP 575/1B / UTEX LB 40</strain>
    </source>
</reference>
<gene>
    <name evidence="1" type="primary">rps14</name>
</gene>
<proteinExistence type="inferred from homology"/>
<protein>
    <recommendedName>
        <fullName evidence="1">Small ribosomal subunit protein uS14c</fullName>
    </recommendedName>
    <alternativeName>
        <fullName evidence="2">30S ribosomal protein S14, chloroplastic</fullName>
    </alternativeName>
</protein>
<geneLocation type="chloroplast"/>
<comment type="function">
    <text evidence="1">Binds 16S rRNA, required for the assembly of 30S particles.</text>
</comment>
<comment type="subunit">
    <text evidence="1">Part of the 30S ribosomal subunit.</text>
</comment>
<comment type="subcellular location">
    <subcellularLocation>
        <location>Plastid</location>
        <location>Chloroplast</location>
    </subcellularLocation>
</comment>
<comment type="similarity">
    <text evidence="1">Belongs to the universal ribosomal protein uS14 family.</text>
</comment>
<keyword id="KW-0150">Chloroplast</keyword>
<keyword id="KW-0934">Plastid</keyword>
<keyword id="KW-0687">Ribonucleoprotein</keyword>
<keyword id="KW-0689">Ribosomal protein</keyword>
<keyword id="KW-0694">RNA-binding</keyword>
<keyword id="KW-0699">rRNA-binding</keyword>
<accession>B2X201</accession>
<evidence type="ECO:0000255" key="1">
    <source>
        <dbReference type="HAMAP-Rule" id="MF_00537"/>
    </source>
</evidence>
<evidence type="ECO:0000305" key="2"/>
<feature type="chain" id="PRO_0000354429" description="Small ribosomal subunit protein uS14c">
    <location>
        <begin position="1"/>
        <end position="100"/>
    </location>
</feature>
<sequence>MAKISLIQREFKRQRLVLKYEKKRTFLKREIQRTPFLKQKLQFHRILQQLPRNSASVRLHNRCLVTGRSRGYYRDFGLSRHVLREMAHQGFLPGVIKSSW</sequence>